<feature type="chain" id="PRO_1000068813" description="Protein AaeX">
    <location>
        <begin position="1"/>
        <end position="67"/>
    </location>
</feature>
<feature type="transmembrane region" description="Helical" evidence="1">
    <location>
        <begin position="3"/>
        <end position="23"/>
    </location>
</feature>
<feature type="transmembrane region" description="Helical" evidence="1">
    <location>
        <begin position="39"/>
        <end position="59"/>
    </location>
</feature>
<comment type="subcellular location">
    <subcellularLocation>
        <location evidence="1">Cell membrane</location>
        <topology evidence="1">Multi-pass membrane protein</topology>
    </subcellularLocation>
</comment>
<comment type="similarity">
    <text evidence="1">Belongs to the AaeX family.</text>
</comment>
<reference key="1">
    <citation type="journal article" date="2007" name="PLoS Genet.">
        <title>The complete genome sequence of Yersinia pseudotuberculosis IP31758, the causative agent of Far East scarlet-like fever.</title>
        <authorList>
            <person name="Eppinger M."/>
            <person name="Rosovitz M.J."/>
            <person name="Fricke W.F."/>
            <person name="Rasko D.A."/>
            <person name="Kokorina G."/>
            <person name="Fayolle C."/>
            <person name="Lindler L.E."/>
            <person name="Carniel E."/>
            <person name="Ravel J."/>
        </authorList>
    </citation>
    <scope>NUCLEOTIDE SEQUENCE [LARGE SCALE GENOMIC DNA]</scope>
    <source>
        <strain>IP 31758</strain>
    </source>
</reference>
<dbReference type="EMBL" id="CP000720">
    <property type="protein sequence ID" value="ABS48588.1"/>
    <property type="molecule type" value="Genomic_DNA"/>
</dbReference>
<dbReference type="RefSeq" id="WP_002210093.1">
    <property type="nucleotide sequence ID" value="NC_009708.1"/>
</dbReference>
<dbReference type="GeneID" id="57975109"/>
<dbReference type="KEGG" id="ypi:YpsIP31758_0419"/>
<dbReference type="HOGENOM" id="CLU_188292_0_0_6"/>
<dbReference type="Proteomes" id="UP000002412">
    <property type="component" value="Chromosome"/>
</dbReference>
<dbReference type="GO" id="GO:0005886">
    <property type="term" value="C:plasma membrane"/>
    <property type="evidence" value="ECO:0007669"/>
    <property type="project" value="UniProtKB-SubCell"/>
</dbReference>
<dbReference type="HAMAP" id="MF_01546">
    <property type="entry name" value="AaeX"/>
    <property type="match status" value="1"/>
</dbReference>
<dbReference type="InterPro" id="IPR012451">
    <property type="entry name" value="DUF1656"/>
</dbReference>
<dbReference type="NCBIfam" id="NF008615">
    <property type="entry name" value="PRK11594.1"/>
    <property type="match status" value="1"/>
</dbReference>
<dbReference type="Pfam" id="PF07869">
    <property type="entry name" value="DUF1656"/>
    <property type="match status" value="1"/>
</dbReference>
<protein>
    <recommendedName>
        <fullName evidence="1">Protein AaeX</fullName>
    </recommendedName>
</protein>
<name>AAEX_YERP3</name>
<gene>
    <name evidence="1" type="primary">aaeX</name>
    <name type="ordered locus">YpsIP31758_0419</name>
</gene>
<organism>
    <name type="scientific">Yersinia pseudotuberculosis serotype O:1b (strain IP 31758)</name>
    <dbReference type="NCBI Taxonomy" id="349747"/>
    <lineage>
        <taxon>Bacteria</taxon>
        <taxon>Pseudomonadati</taxon>
        <taxon>Pseudomonadota</taxon>
        <taxon>Gammaproteobacteria</taxon>
        <taxon>Enterobacterales</taxon>
        <taxon>Yersiniaceae</taxon>
        <taxon>Yersinia</taxon>
    </lineage>
</organism>
<proteinExistence type="inferred from homology"/>
<accession>A7FDT4</accession>
<sequence>MSLLPVMVIFGLSFPPIFLELLISLALFFVVRRILQPTGIYEFVWHPALFNTALYCCLFYLTSRLFS</sequence>
<keyword id="KW-1003">Cell membrane</keyword>
<keyword id="KW-0472">Membrane</keyword>
<keyword id="KW-0812">Transmembrane</keyword>
<keyword id="KW-1133">Transmembrane helix</keyword>
<evidence type="ECO:0000255" key="1">
    <source>
        <dbReference type="HAMAP-Rule" id="MF_01546"/>
    </source>
</evidence>